<gene>
    <name evidence="1" type="primary">caiE</name>
    <name type="ordered locus">E2348C_0036</name>
</gene>
<keyword id="KW-1185">Reference proteome</keyword>
<keyword id="KW-0677">Repeat</keyword>
<keyword id="KW-0808">Transferase</keyword>
<protein>
    <recommendedName>
        <fullName evidence="1">Carnitine operon protein CaiE</fullName>
    </recommendedName>
</protein>
<reference key="1">
    <citation type="journal article" date="2009" name="J. Bacteriol.">
        <title>Complete genome sequence and comparative genome analysis of enteropathogenic Escherichia coli O127:H6 strain E2348/69.</title>
        <authorList>
            <person name="Iguchi A."/>
            <person name="Thomson N.R."/>
            <person name="Ogura Y."/>
            <person name="Saunders D."/>
            <person name="Ooka T."/>
            <person name="Henderson I.R."/>
            <person name="Harris D."/>
            <person name="Asadulghani M."/>
            <person name="Kurokawa K."/>
            <person name="Dean P."/>
            <person name="Kenny B."/>
            <person name="Quail M.A."/>
            <person name="Thurston S."/>
            <person name="Dougan G."/>
            <person name="Hayashi T."/>
            <person name="Parkhill J."/>
            <person name="Frankel G."/>
        </authorList>
    </citation>
    <scope>NUCLEOTIDE SEQUENCE [LARGE SCALE GENOMIC DNA]</scope>
    <source>
        <strain>E2348/69 / EPEC</strain>
    </source>
</reference>
<feature type="chain" id="PRO_1000185131" description="Carnitine operon protein CaiE">
    <location>
        <begin position="1"/>
        <end position="196"/>
    </location>
</feature>
<feature type="region of interest" description="Disordered" evidence="2">
    <location>
        <begin position="173"/>
        <end position="196"/>
    </location>
</feature>
<feature type="compositionally biased region" description="Polar residues" evidence="2">
    <location>
        <begin position="187"/>
        <end position="196"/>
    </location>
</feature>
<proteinExistence type="inferred from homology"/>
<evidence type="ECO:0000255" key="1">
    <source>
        <dbReference type="HAMAP-Rule" id="MF_01525"/>
    </source>
</evidence>
<evidence type="ECO:0000256" key="2">
    <source>
        <dbReference type="SAM" id="MobiDB-lite"/>
    </source>
</evidence>
<dbReference type="EMBL" id="FM180568">
    <property type="protein sequence ID" value="CAS07584.1"/>
    <property type="molecule type" value="Genomic_DNA"/>
</dbReference>
<dbReference type="RefSeq" id="WP_000122882.1">
    <property type="nucleotide sequence ID" value="NC_011601.1"/>
</dbReference>
<dbReference type="SMR" id="B7UI81"/>
<dbReference type="KEGG" id="ecg:E2348C_0036"/>
<dbReference type="HOGENOM" id="CLU_064827_4_2_6"/>
<dbReference type="UniPathway" id="UPA00117"/>
<dbReference type="Proteomes" id="UP000008205">
    <property type="component" value="Chromosome"/>
</dbReference>
<dbReference type="GO" id="GO:0016740">
    <property type="term" value="F:transferase activity"/>
    <property type="evidence" value="ECO:0007669"/>
    <property type="project" value="UniProtKB-KW"/>
</dbReference>
<dbReference type="GO" id="GO:0009437">
    <property type="term" value="P:carnitine metabolic process"/>
    <property type="evidence" value="ECO:0007669"/>
    <property type="project" value="UniProtKB-UniRule"/>
</dbReference>
<dbReference type="CDD" id="cd04745">
    <property type="entry name" value="LbH_paaY_like"/>
    <property type="match status" value="1"/>
</dbReference>
<dbReference type="FunFam" id="2.160.10.10:FF:000012">
    <property type="entry name" value="Carnitine operon protein CaiE"/>
    <property type="match status" value="1"/>
</dbReference>
<dbReference type="Gene3D" id="2.160.10.10">
    <property type="entry name" value="Hexapeptide repeat proteins"/>
    <property type="match status" value="1"/>
</dbReference>
<dbReference type="HAMAP" id="MF_01525">
    <property type="entry name" value="CaiE"/>
    <property type="match status" value="1"/>
</dbReference>
<dbReference type="InterPro" id="IPR023446">
    <property type="entry name" value="CaiE"/>
</dbReference>
<dbReference type="InterPro" id="IPR001451">
    <property type="entry name" value="Hexapep"/>
</dbReference>
<dbReference type="InterPro" id="IPR050484">
    <property type="entry name" value="Transf_Hexapept/Carb_Anhydrase"/>
</dbReference>
<dbReference type="InterPro" id="IPR011004">
    <property type="entry name" value="Trimer_LpxA-like_sf"/>
</dbReference>
<dbReference type="NCBIfam" id="NF010150">
    <property type="entry name" value="PRK13627.1"/>
    <property type="match status" value="1"/>
</dbReference>
<dbReference type="PANTHER" id="PTHR13061">
    <property type="entry name" value="DYNACTIN SUBUNIT P25"/>
    <property type="match status" value="1"/>
</dbReference>
<dbReference type="PANTHER" id="PTHR13061:SF29">
    <property type="entry name" value="GAMMA CARBONIC ANHYDRASE-LIKE 1, MITOCHONDRIAL-RELATED"/>
    <property type="match status" value="1"/>
</dbReference>
<dbReference type="Pfam" id="PF00132">
    <property type="entry name" value="Hexapep"/>
    <property type="match status" value="1"/>
</dbReference>
<dbReference type="SUPFAM" id="SSF51161">
    <property type="entry name" value="Trimeric LpxA-like enzymes"/>
    <property type="match status" value="1"/>
</dbReference>
<organism>
    <name type="scientific">Escherichia coli O127:H6 (strain E2348/69 / EPEC)</name>
    <dbReference type="NCBI Taxonomy" id="574521"/>
    <lineage>
        <taxon>Bacteria</taxon>
        <taxon>Pseudomonadati</taxon>
        <taxon>Pseudomonadota</taxon>
        <taxon>Gammaproteobacteria</taxon>
        <taxon>Enterobacterales</taxon>
        <taxon>Enterobacteriaceae</taxon>
        <taxon>Escherichia</taxon>
    </lineage>
</organism>
<comment type="function">
    <text evidence="1">Overproduction of CaiE stimulates the activity of CaiB and CaiD.</text>
</comment>
<comment type="pathway">
    <text evidence="1">Amine and polyamine metabolism; carnitine metabolism.</text>
</comment>
<comment type="similarity">
    <text evidence="1">Belongs to the transferase hexapeptide repeat family.</text>
</comment>
<sequence>MSYYAFEGLIPVVHPTAFVHPSAVLIGDVIVGAGVYIGPLASLRGDYGRLIVQAGANIQDGCIMHGYCDTDTIVGENGHIGHGAILHGCVIGRDALVGMNSVIMDGAVIGEESIVAAMSFVKAGFRGEKRQLLMGTPARAVRSVSDDELHWKRLNTKEYQDLVGRCHASLHETQPLRQMEENRPRLQGTTDVTPKR</sequence>
<accession>B7UI81</accession>
<name>CAIE_ECO27</name>